<reference key="1">
    <citation type="journal article" date="2000" name="Nature">
        <title>Sequence and analysis of chromosome 1 of the plant Arabidopsis thaliana.</title>
        <authorList>
            <person name="Theologis A."/>
            <person name="Ecker J.R."/>
            <person name="Palm C.J."/>
            <person name="Federspiel N.A."/>
            <person name="Kaul S."/>
            <person name="White O."/>
            <person name="Alonso J."/>
            <person name="Altafi H."/>
            <person name="Araujo R."/>
            <person name="Bowman C.L."/>
            <person name="Brooks S.Y."/>
            <person name="Buehler E."/>
            <person name="Chan A."/>
            <person name="Chao Q."/>
            <person name="Chen H."/>
            <person name="Cheuk R.F."/>
            <person name="Chin C.W."/>
            <person name="Chung M.K."/>
            <person name="Conn L."/>
            <person name="Conway A.B."/>
            <person name="Conway A.R."/>
            <person name="Creasy T.H."/>
            <person name="Dewar K."/>
            <person name="Dunn P."/>
            <person name="Etgu P."/>
            <person name="Feldblyum T.V."/>
            <person name="Feng J.-D."/>
            <person name="Fong B."/>
            <person name="Fujii C.Y."/>
            <person name="Gill J.E."/>
            <person name="Goldsmith A.D."/>
            <person name="Haas B."/>
            <person name="Hansen N.F."/>
            <person name="Hughes B."/>
            <person name="Huizar L."/>
            <person name="Hunter J.L."/>
            <person name="Jenkins J."/>
            <person name="Johnson-Hopson C."/>
            <person name="Khan S."/>
            <person name="Khaykin E."/>
            <person name="Kim C.J."/>
            <person name="Koo H.L."/>
            <person name="Kremenetskaia I."/>
            <person name="Kurtz D.B."/>
            <person name="Kwan A."/>
            <person name="Lam B."/>
            <person name="Langin-Hooper S."/>
            <person name="Lee A."/>
            <person name="Lee J.M."/>
            <person name="Lenz C.A."/>
            <person name="Li J.H."/>
            <person name="Li Y.-P."/>
            <person name="Lin X."/>
            <person name="Liu S.X."/>
            <person name="Liu Z.A."/>
            <person name="Luros J.S."/>
            <person name="Maiti R."/>
            <person name="Marziali A."/>
            <person name="Militscher J."/>
            <person name="Miranda M."/>
            <person name="Nguyen M."/>
            <person name="Nierman W.C."/>
            <person name="Osborne B.I."/>
            <person name="Pai G."/>
            <person name="Peterson J."/>
            <person name="Pham P.K."/>
            <person name="Rizzo M."/>
            <person name="Rooney T."/>
            <person name="Rowley D."/>
            <person name="Sakano H."/>
            <person name="Salzberg S.L."/>
            <person name="Schwartz J.R."/>
            <person name="Shinn P."/>
            <person name="Southwick A.M."/>
            <person name="Sun H."/>
            <person name="Tallon L.J."/>
            <person name="Tambunga G."/>
            <person name="Toriumi M.J."/>
            <person name="Town C.D."/>
            <person name="Utterback T."/>
            <person name="Van Aken S."/>
            <person name="Vaysberg M."/>
            <person name="Vysotskaia V.S."/>
            <person name="Walker M."/>
            <person name="Wu D."/>
            <person name="Yu G."/>
            <person name="Fraser C.M."/>
            <person name="Venter J.C."/>
            <person name="Davis R.W."/>
        </authorList>
    </citation>
    <scope>NUCLEOTIDE SEQUENCE [LARGE SCALE GENOMIC DNA]</scope>
    <source>
        <strain>cv. Columbia</strain>
    </source>
</reference>
<reference key="2">
    <citation type="journal article" date="2017" name="Plant J.">
        <title>Araport11: a complete reannotation of the Arabidopsis thaliana reference genome.</title>
        <authorList>
            <person name="Cheng C.Y."/>
            <person name="Krishnakumar V."/>
            <person name="Chan A.P."/>
            <person name="Thibaud-Nissen F."/>
            <person name="Schobel S."/>
            <person name="Town C.D."/>
        </authorList>
    </citation>
    <scope>GENOME REANNOTATION</scope>
    <source>
        <strain>cv. Columbia</strain>
    </source>
</reference>
<reference key="3">
    <citation type="journal article" date="2002" name="Genome Biol.">
        <title>Evaluation and classification of RING-finger domains encoded by the Arabidopsis genome.</title>
        <authorList>
            <person name="Kosarev P."/>
            <person name="Mayer K.F.X."/>
            <person name="Hardtke C.S."/>
        </authorList>
    </citation>
    <scope>GENE FAMILY ORGANIZATION</scope>
</reference>
<reference key="4">
    <citation type="journal article" date="2006" name="J. Mol. Evol.">
        <title>The ATL gene family from Arabidopsis thaliana and Oryza sativa comprises a large number of putative ubiquitin ligases of the RING-H2 type.</title>
        <authorList>
            <person name="Serrano M."/>
            <person name="Parra S."/>
            <person name="Alcaraz L.D."/>
            <person name="Guzman P."/>
        </authorList>
    </citation>
    <scope>NOMENCLATURE</scope>
    <scope>GENE FAMILY ORGANIZATION</scope>
</reference>
<dbReference type="EC" id="2.3.2.27" evidence="5"/>
<dbReference type="EMBL" id="AC069160">
    <property type="protein sequence ID" value="AAG51457.1"/>
    <property type="molecule type" value="Genomic_DNA"/>
</dbReference>
<dbReference type="EMBL" id="CP002684">
    <property type="status" value="NOT_ANNOTATED_CDS"/>
    <property type="molecule type" value="Genomic_DNA"/>
</dbReference>
<dbReference type="PIR" id="D86474">
    <property type="entry name" value="D86474"/>
</dbReference>
<dbReference type="SMR" id="Q9C7I1"/>
<dbReference type="PaxDb" id="3702-AT1G35330.1"/>
<dbReference type="Araport" id="AT1G35330"/>
<dbReference type="TAIR" id="AT1G35330">
    <property type="gene designation" value="ATL34"/>
</dbReference>
<dbReference type="eggNOG" id="KOG0800">
    <property type="taxonomic scope" value="Eukaryota"/>
</dbReference>
<dbReference type="HOGENOM" id="CLU_035191_1_0_1"/>
<dbReference type="InParanoid" id="Q9C7I1"/>
<dbReference type="OMA" id="MPGCSHA"/>
<dbReference type="PhylomeDB" id="Q9C7I1"/>
<dbReference type="UniPathway" id="UPA00143"/>
<dbReference type="PRO" id="PR:Q9C7I1"/>
<dbReference type="Proteomes" id="UP000006548">
    <property type="component" value="Chromosome 1"/>
</dbReference>
<dbReference type="ExpressionAtlas" id="Q9C7I1">
    <property type="expression patterns" value="baseline and differential"/>
</dbReference>
<dbReference type="GO" id="GO:0016020">
    <property type="term" value="C:membrane"/>
    <property type="evidence" value="ECO:0007669"/>
    <property type="project" value="UniProtKB-SubCell"/>
</dbReference>
<dbReference type="GO" id="GO:0016740">
    <property type="term" value="F:transferase activity"/>
    <property type="evidence" value="ECO:0007669"/>
    <property type="project" value="UniProtKB-KW"/>
</dbReference>
<dbReference type="GO" id="GO:0008270">
    <property type="term" value="F:zinc ion binding"/>
    <property type="evidence" value="ECO:0007669"/>
    <property type="project" value="UniProtKB-KW"/>
</dbReference>
<dbReference type="GO" id="GO:0016567">
    <property type="term" value="P:protein ubiquitination"/>
    <property type="evidence" value="ECO:0007669"/>
    <property type="project" value="UniProtKB-UniPathway"/>
</dbReference>
<dbReference type="CDD" id="cd16461">
    <property type="entry name" value="RING-H2_EL5-like"/>
    <property type="match status" value="1"/>
</dbReference>
<dbReference type="FunFam" id="3.30.40.10:FF:000187">
    <property type="entry name" value="E3 ubiquitin-protein ligase ATL6"/>
    <property type="match status" value="1"/>
</dbReference>
<dbReference type="Gene3D" id="3.30.40.10">
    <property type="entry name" value="Zinc/RING finger domain, C3HC4 (zinc finger)"/>
    <property type="match status" value="1"/>
</dbReference>
<dbReference type="InterPro" id="IPR053238">
    <property type="entry name" value="RING-H2_zinc_finger"/>
</dbReference>
<dbReference type="InterPro" id="IPR001841">
    <property type="entry name" value="Znf_RING"/>
</dbReference>
<dbReference type="InterPro" id="IPR011016">
    <property type="entry name" value="Znf_RING-CH"/>
</dbReference>
<dbReference type="InterPro" id="IPR013083">
    <property type="entry name" value="Znf_RING/FYVE/PHD"/>
</dbReference>
<dbReference type="PANTHER" id="PTHR14155">
    <property type="entry name" value="RING FINGER DOMAIN-CONTAINING"/>
    <property type="match status" value="1"/>
</dbReference>
<dbReference type="PANTHER" id="PTHR14155:SF613">
    <property type="entry name" value="RING-H2 FINGER PROTEIN ATL34-RELATED"/>
    <property type="match status" value="1"/>
</dbReference>
<dbReference type="Pfam" id="PF13639">
    <property type="entry name" value="zf-RING_2"/>
    <property type="match status" value="1"/>
</dbReference>
<dbReference type="SMART" id="SM00184">
    <property type="entry name" value="RING"/>
    <property type="match status" value="1"/>
</dbReference>
<dbReference type="SMART" id="SM00744">
    <property type="entry name" value="RINGv"/>
    <property type="match status" value="1"/>
</dbReference>
<dbReference type="SUPFAM" id="SSF57850">
    <property type="entry name" value="RING/U-box"/>
    <property type="match status" value="1"/>
</dbReference>
<dbReference type="PROSITE" id="PS50089">
    <property type="entry name" value="ZF_RING_2"/>
    <property type="match status" value="1"/>
</dbReference>
<organism>
    <name type="scientific">Arabidopsis thaliana</name>
    <name type="common">Mouse-ear cress</name>
    <dbReference type="NCBI Taxonomy" id="3702"/>
    <lineage>
        <taxon>Eukaryota</taxon>
        <taxon>Viridiplantae</taxon>
        <taxon>Streptophyta</taxon>
        <taxon>Embryophyta</taxon>
        <taxon>Tracheophyta</taxon>
        <taxon>Spermatophyta</taxon>
        <taxon>Magnoliopsida</taxon>
        <taxon>eudicotyledons</taxon>
        <taxon>Gunneridae</taxon>
        <taxon>Pentapetalae</taxon>
        <taxon>rosids</taxon>
        <taxon>malvids</taxon>
        <taxon>Brassicales</taxon>
        <taxon>Brassicaceae</taxon>
        <taxon>Camelineae</taxon>
        <taxon>Arabidopsis</taxon>
    </lineage>
</organism>
<name>ATL34_ARATH</name>
<keyword id="KW-0472">Membrane</keyword>
<keyword id="KW-0479">Metal-binding</keyword>
<keyword id="KW-1185">Reference proteome</keyword>
<keyword id="KW-0732">Signal</keyword>
<keyword id="KW-0808">Transferase</keyword>
<keyword id="KW-0812">Transmembrane</keyword>
<keyword id="KW-1133">Transmembrane helix</keyword>
<keyword id="KW-0833">Ubl conjugation pathway</keyword>
<keyword id="KW-0862">Zinc</keyword>
<keyword id="KW-0863">Zinc-finger</keyword>
<protein>
    <recommendedName>
        <fullName>RING-H2 finger protein ATL34</fullName>
        <ecNumber evidence="5">2.3.2.27</ecNumber>
    </recommendedName>
    <alternativeName>
        <fullName evidence="5">RING-type E3 ubiquitin transferase ATL34</fullName>
    </alternativeName>
</protein>
<evidence type="ECO:0000250" key="1"/>
<evidence type="ECO:0000255" key="2"/>
<evidence type="ECO:0000255" key="3">
    <source>
        <dbReference type="PROSITE-ProRule" id="PRU00175"/>
    </source>
</evidence>
<evidence type="ECO:0000256" key="4">
    <source>
        <dbReference type="SAM" id="MobiDB-lite"/>
    </source>
</evidence>
<evidence type="ECO:0000305" key="5"/>
<proteinExistence type="evidence at transcript level"/>
<feature type="signal peptide" evidence="2">
    <location>
        <begin position="1"/>
        <end position="26"/>
    </location>
</feature>
<feature type="chain" id="PRO_0000030703" description="RING-H2 finger protein ATL34">
    <location>
        <begin position="27"/>
        <end position="327"/>
    </location>
</feature>
<feature type="transmembrane region" description="Helical" evidence="2">
    <location>
        <begin position="47"/>
        <end position="67"/>
    </location>
</feature>
<feature type="zinc finger region" description="RING-type; atypical" evidence="3">
    <location>
        <begin position="128"/>
        <end position="170"/>
    </location>
</feature>
<feature type="region of interest" description="Disordered" evidence="4">
    <location>
        <begin position="280"/>
        <end position="327"/>
    </location>
</feature>
<feature type="compositionally biased region" description="Basic and acidic residues" evidence="4">
    <location>
        <begin position="303"/>
        <end position="327"/>
    </location>
</feature>
<comment type="catalytic activity">
    <reaction evidence="5">
        <text>S-ubiquitinyl-[E2 ubiquitin-conjugating enzyme]-L-cysteine + [acceptor protein]-L-lysine = [E2 ubiquitin-conjugating enzyme]-L-cysteine + N(6)-ubiquitinyl-[acceptor protein]-L-lysine.</text>
        <dbReference type="EC" id="2.3.2.27"/>
    </reaction>
</comment>
<comment type="pathway">
    <text>Protein modification; protein ubiquitination.</text>
</comment>
<comment type="subcellular location">
    <subcellularLocation>
        <location evidence="5">Membrane</location>
        <topology evidence="5">Single-pass membrane protein</topology>
    </subcellularLocation>
</comment>
<comment type="domain">
    <text evidence="1">The RING-type zinc finger domain mediates binding to an E2 ubiquitin-conjugating enzyme.</text>
</comment>
<comment type="similarity">
    <text evidence="5">Belongs to the RING-type zinc finger family. ATL subfamily.</text>
</comment>
<accession>Q9C7I1</accession>
<sequence>MTIGKSPILLHHHVIFLLLLVLQVSGQHQPRTTAPPYIAQRPNQVPAVIIAMLMFTLLFSMLACCVCYKYTNTSPHGTSSDTEEGGHGEVAFTRRTSRGLGKDVINSFPSFLYSQVKGLKIGKGGVECAICLNEFEDEETLRLMPPCSHAFHASCIDVWLSSRSTCPVCRASLPPKPGSDQNSLYPFIRPHDNQDMDLENVTARRSVLESPDVRLLDRLSWSNNTGANTPPRSRSTGLSNWRITELLFPRSHSTGHSLVPRVENLDRFTLQLPEEVRRQLSHMKTLPQARSSREGYRSGSVGSERRGKGKEKEFGEGSFDRLKAEMV</sequence>
<gene>
    <name type="primary">ATL34</name>
    <name type="ordered locus">At1g35330</name>
    <name type="ORF">T9I1.10</name>
</gene>